<reference key="1">
    <citation type="journal article" date="2009" name="Proc. Natl. Acad. Sci. U.S.A.">
        <title>The mosaic genome structure of the Wolbachia wRi strain infecting Drosophila simulans.</title>
        <authorList>
            <person name="Klasson L."/>
            <person name="Westberg J."/>
            <person name="Sapountzis P."/>
            <person name="Naeslund K."/>
            <person name="Lutnaes Y."/>
            <person name="Darby A.C."/>
            <person name="Veneti Z."/>
            <person name="Chen L."/>
            <person name="Braig H.R."/>
            <person name="Garrett R."/>
            <person name="Bourtzis K."/>
            <person name="Andersson S.G."/>
        </authorList>
    </citation>
    <scope>NUCLEOTIDE SEQUENCE [LARGE SCALE GENOMIC DNA]</scope>
    <source>
        <strain>wRi</strain>
    </source>
</reference>
<name>Y2620_WOLWR</name>
<comment type="subcellular location">
    <subcellularLocation>
        <location evidence="1">Cytoplasm</location>
    </subcellularLocation>
</comment>
<comment type="similarity">
    <text evidence="1">Belongs to the TACO1 family.</text>
</comment>
<dbReference type="EMBL" id="CP001391">
    <property type="protein sequence ID" value="ACN95084.1"/>
    <property type="molecule type" value="Genomic_DNA"/>
</dbReference>
<dbReference type="RefSeq" id="WP_012673111.1">
    <property type="nucleotide sequence ID" value="NZ_MKIF01000151.1"/>
</dbReference>
<dbReference type="SMR" id="C0R5P2"/>
<dbReference type="STRING" id="66084.WRi_002620"/>
<dbReference type="KEGG" id="wri:WRi_002620"/>
<dbReference type="HOGENOM" id="CLU_062974_2_2_5"/>
<dbReference type="Proteomes" id="UP000001293">
    <property type="component" value="Chromosome"/>
</dbReference>
<dbReference type="GO" id="GO:0005737">
    <property type="term" value="C:cytoplasm"/>
    <property type="evidence" value="ECO:0007669"/>
    <property type="project" value="UniProtKB-SubCell"/>
</dbReference>
<dbReference type="GO" id="GO:0003677">
    <property type="term" value="F:DNA binding"/>
    <property type="evidence" value="ECO:0007669"/>
    <property type="project" value="UniProtKB-UniRule"/>
</dbReference>
<dbReference type="GO" id="GO:0006355">
    <property type="term" value="P:regulation of DNA-templated transcription"/>
    <property type="evidence" value="ECO:0007669"/>
    <property type="project" value="UniProtKB-UniRule"/>
</dbReference>
<dbReference type="FunFam" id="1.10.10.200:FF:000002">
    <property type="entry name" value="Probable transcriptional regulatory protein CLM62_37755"/>
    <property type="match status" value="1"/>
</dbReference>
<dbReference type="Gene3D" id="1.10.10.200">
    <property type="match status" value="1"/>
</dbReference>
<dbReference type="Gene3D" id="3.30.70.980">
    <property type="match status" value="2"/>
</dbReference>
<dbReference type="HAMAP" id="MF_00693">
    <property type="entry name" value="Transcrip_reg_TACO1"/>
    <property type="match status" value="1"/>
</dbReference>
<dbReference type="InterPro" id="IPR017856">
    <property type="entry name" value="Integrase-like_N"/>
</dbReference>
<dbReference type="InterPro" id="IPR048300">
    <property type="entry name" value="TACO1_YebC-like_2nd/3rd_dom"/>
</dbReference>
<dbReference type="InterPro" id="IPR049083">
    <property type="entry name" value="TACO1_YebC_N"/>
</dbReference>
<dbReference type="InterPro" id="IPR002876">
    <property type="entry name" value="Transcrip_reg_TACO1-like"/>
</dbReference>
<dbReference type="InterPro" id="IPR026564">
    <property type="entry name" value="Transcrip_reg_TACO1-like_dom3"/>
</dbReference>
<dbReference type="InterPro" id="IPR029072">
    <property type="entry name" value="YebC-like"/>
</dbReference>
<dbReference type="NCBIfam" id="NF001030">
    <property type="entry name" value="PRK00110.1"/>
    <property type="match status" value="1"/>
</dbReference>
<dbReference type="NCBIfam" id="NF009044">
    <property type="entry name" value="PRK12378.1"/>
    <property type="match status" value="1"/>
</dbReference>
<dbReference type="NCBIfam" id="TIGR01033">
    <property type="entry name" value="YebC/PmpR family DNA-binding transcriptional regulator"/>
    <property type="match status" value="1"/>
</dbReference>
<dbReference type="PANTHER" id="PTHR12532:SF11">
    <property type="match status" value="1"/>
</dbReference>
<dbReference type="PANTHER" id="PTHR12532">
    <property type="entry name" value="TRANSLATIONAL ACTIVATOR OF CYTOCHROME C OXIDASE 1"/>
    <property type="match status" value="1"/>
</dbReference>
<dbReference type="Pfam" id="PF20772">
    <property type="entry name" value="TACO1_YebC_N"/>
    <property type="match status" value="1"/>
</dbReference>
<dbReference type="Pfam" id="PF01709">
    <property type="entry name" value="Transcrip_reg"/>
    <property type="match status" value="1"/>
</dbReference>
<dbReference type="SUPFAM" id="SSF75625">
    <property type="entry name" value="YebC-like"/>
    <property type="match status" value="1"/>
</dbReference>
<gene>
    <name type="ordered locus">WRi_002620</name>
</gene>
<sequence length="246" mass="27566">MAGHSQFSNIKHRKGAQDAKRSQKFTKLIREITVAAKQGLPDPELNPRLRSAIFAARKENLPKDKIETAIKNATGNVAGENYEEIQYEGHGPSGTALIVHALTNNRNRTASEVRYIFSRKGGNLGETGSVSYLFDHVGLIVYKAEGVNFDDLFSHGIELEVLNVEENDKEGLHVITCEIKDFGKVRDAFYAKFGEPELARLSWQPKDLIEISDKELIDKLSALVEELEDNDDVQYVEGNFTFVDKL</sequence>
<proteinExistence type="inferred from homology"/>
<feature type="chain" id="PRO_1000200121" description="Probable transcriptional regulatory protein WRi_002620">
    <location>
        <begin position="1"/>
        <end position="246"/>
    </location>
</feature>
<feature type="region of interest" description="Disordered" evidence="2">
    <location>
        <begin position="1"/>
        <end position="22"/>
    </location>
</feature>
<organism>
    <name type="scientific">Wolbachia sp. subsp. Drosophila simulans (strain wRi)</name>
    <dbReference type="NCBI Taxonomy" id="66084"/>
    <lineage>
        <taxon>Bacteria</taxon>
        <taxon>Pseudomonadati</taxon>
        <taxon>Pseudomonadota</taxon>
        <taxon>Alphaproteobacteria</taxon>
        <taxon>Rickettsiales</taxon>
        <taxon>Anaplasmataceae</taxon>
        <taxon>Wolbachieae</taxon>
        <taxon>Wolbachia</taxon>
    </lineage>
</organism>
<protein>
    <recommendedName>
        <fullName evidence="1">Probable transcriptional regulatory protein WRi_002620</fullName>
    </recommendedName>
</protein>
<keyword id="KW-0963">Cytoplasm</keyword>
<keyword id="KW-0238">DNA-binding</keyword>
<keyword id="KW-0804">Transcription</keyword>
<keyword id="KW-0805">Transcription regulation</keyword>
<accession>C0R5P2</accession>
<evidence type="ECO:0000255" key="1">
    <source>
        <dbReference type="HAMAP-Rule" id="MF_00693"/>
    </source>
</evidence>
<evidence type="ECO:0000256" key="2">
    <source>
        <dbReference type="SAM" id="MobiDB-lite"/>
    </source>
</evidence>